<proteinExistence type="inferred from homology"/>
<keyword id="KW-0004">4Fe-4S</keyword>
<keyword id="KW-0963">Cytoplasm</keyword>
<keyword id="KW-0408">Iron</keyword>
<keyword id="KW-0411">Iron-sulfur</keyword>
<keyword id="KW-0479">Metal-binding</keyword>
<keyword id="KW-0662">Pyridine nucleotide biosynthesis</keyword>
<keyword id="KW-0808">Transferase</keyword>
<dbReference type="EC" id="2.5.1.72" evidence="1"/>
<dbReference type="EMBL" id="BA000031">
    <property type="protein sequence ID" value="BAC59326.1"/>
    <property type="molecule type" value="Genomic_DNA"/>
</dbReference>
<dbReference type="RefSeq" id="NP_797442.1">
    <property type="nucleotide sequence ID" value="NC_004603.1"/>
</dbReference>
<dbReference type="RefSeq" id="WP_005483627.1">
    <property type="nucleotide sequence ID" value="NC_004603.1"/>
</dbReference>
<dbReference type="SMR" id="Q87QT6"/>
<dbReference type="GeneID" id="1188567"/>
<dbReference type="KEGG" id="vpa:VP1063"/>
<dbReference type="PATRIC" id="fig|223926.6.peg.1008"/>
<dbReference type="eggNOG" id="COG0379">
    <property type="taxonomic scope" value="Bacteria"/>
</dbReference>
<dbReference type="HOGENOM" id="CLU_047382_1_0_6"/>
<dbReference type="UniPathway" id="UPA00253">
    <property type="reaction ID" value="UER00327"/>
</dbReference>
<dbReference type="Proteomes" id="UP000002493">
    <property type="component" value="Chromosome 1"/>
</dbReference>
<dbReference type="GO" id="GO:0005829">
    <property type="term" value="C:cytosol"/>
    <property type="evidence" value="ECO:0007669"/>
    <property type="project" value="TreeGrafter"/>
</dbReference>
<dbReference type="GO" id="GO:0051539">
    <property type="term" value="F:4 iron, 4 sulfur cluster binding"/>
    <property type="evidence" value="ECO:0007669"/>
    <property type="project" value="UniProtKB-KW"/>
</dbReference>
<dbReference type="GO" id="GO:0046872">
    <property type="term" value="F:metal ion binding"/>
    <property type="evidence" value="ECO:0007669"/>
    <property type="project" value="UniProtKB-KW"/>
</dbReference>
<dbReference type="GO" id="GO:0008987">
    <property type="term" value="F:quinolinate synthetase A activity"/>
    <property type="evidence" value="ECO:0007669"/>
    <property type="project" value="UniProtKB-UniRule"/>
</dbReference>
<dbReference type="GO" id="GO:0034628">
    <property type="term" value="P:'de novo' NAD biosynthetic process from L-aspartate"/>
    <property type="evidence" value="ECO:0007669"/>
    <property type="project" value="TreeGrafter"/>
</dbReference>
<dbReference type="FunFam" id="3.40.50.10800:FF:000001">
    <property type="entry name" value="Quinolinate synthase A"/>
    <property type="match status" value="1"/>
</dbReference>
<dbReference type="FunFam" id="3.40.50.10800:FF:000003">
    <property type="entry name" value="Quinolinate synthase A"/>
    <property type="match status" value="1"/>
</dbReference>
<dbReference type="Gene3D" id="3.40.50.10800">
    <property type="entry name" value="NadA-like"/>
    <property type="match status" value="3"/>
</dbReference>
<dbReference type="HAMAP" id="MF_00567">
    <property type="entry name" value="NadA_type1"/>
    <property type="match status" value="1"/>
</dbReference>
<dbReference type="InterPro" id="IPR003473">
    <property type="entry name" value="NadA"/>
</dbReference>
<dbReference type="InterPro" id="IPR036094">
    <property type="entry name" value="NadA_sf"/>
</dbReference>
<dbReference type="InterPro" id="IPR023513">
    <property type="entry name" value="Quinolinate_synth_A_type1"/>
</dbReference>
<dbReference type="NCBIfam" id="TIGR00550">
    <property type="entry name" value="nadA"/>
    <property type="match status" value="1"/>
</dbReference>
<dbReference type="NCBIfam" id="NF006877">
    <property type="entry name" value="PRK09375.1-1"/>
    <property type="match status" value="1"/>
</dbReference>
<dbReference type="NCBIfam" id="NF006878">
    <property type="entry name" value="PRK09375.1-2"/>
    <property type="match status" value="1"/>
</dbReference>
<dbReference type="PANTHER" id="PTHR30573:SF0">
    <property type="entry name" value="QUINOLINATE SYNTHASE, CHLOROPLASTIC"/>
    <property type="match status" value="1"/>
</dbReference>
<dbReference type="PANTHER" id="PTHR30573">
    <property type="entry name" value="QUINOLINATE SYNTHETASE A"/>
    <property type="match status" value="1"/>
</dbReference>
<dbReference type="Pfam" id="PF02445">
    <property type="entry name" value="NadA"/>
    <property type="match status" value="1"/>
</dbReference>
<dbReference type="SUPFAM" id="SSF142754">
    <property type="entry name" value="NadA-like"/>
    <property type="match status" value="1"/>
</dbReference>
<name>NADA_VIBPA</name>
<feature type="chain" id="PRO_0000155774" description="Quinolinate synthase">
    <location>
        <begin position="1"/>
        <end position="353"/>
    </location>
</feature>
<feature type="binding site" evidence="1">
    <location>
        <position position="47"/>
    </location>
    <ligand>
        <name>iminosuccinate</name>
        <dbReference type="ChEBI" id="CHEBI:77875"/>
    </ligand>
</feature>
<feature type="binding site" evidence="1">
    <location>
        <position position="68"/>
    </location>
    <ligand>
        <name>iminosuccinate</name>
        <dbReference type="ChEBI" id="CHEBI:77875"/>
    </ligand>
</feature>
<feature type="binding site" evidence="1">
    <location>
        <position position="113"/>
    </location>
    <ligand>
        <name>[4Fe-4S] cluster</name>
        <dbReference type="ChEBI" id="CHEBI:49883"/>
    </ligand>
</feature>
<feature type="binding site" evidence="1">
    <location>
        <begin position="139"/>
        <end position="141"/>
    </location>
    <ligand>
        <name>iminosuccinate</name>
        <dbReference type="ChEBI" id="CHEBI:77875"/>
    </ligand>
</feature>
<feature type="binding site" evidence="1">
    <location>
        <position position="156"/>
    </location>
    <ligand>
        <name>iminosuccinate</name>
        <dbReference type="ChEBI" id="CHEBI:77875"/>
    </ligand>
</feature>
<feature type="binding site" evidence="1">
    <location>
        <position position="200"/>
    </location>
    <ligand>
        <name>[4Fe-4S] cluster</name>
        <dbReference type="ChEBI" id="CHEBI:49883"/>
    </ligand>
</feature>
<feature type="binding site" evidence="1">
    <location>
        <begin position="226"/>
        <end position="228"/>
    </location>
    <ligand>
        <name>iminosuccinate</name>
        <dbReference type="ChEBI" id="CHEBI:77875"/>
    </ligand>
</feature>
<feature type="binding site" evidence="1">
    <location>
        <position position="243"/>
    </location>
    <ligand>
        <name>iminosuccinate</name>
        <dbReference type="ChEBI" id="CHEBI:77875"/>
    </ligand>
</feature>
<feature type="binding site" evidence="1">
    <location>
        <position position="297"/>
    </location>
    <ligand>
        <name>[4Fe-4S] cluster</name>
        <dbReference type="ChEBI" id="CHEBI:49883"/>
    </ligand>
</feature>
<accession>Q87QT6</accession>
<comment type="function">
    <text evidence="1">Catalyzes the condensation of iminoaspartate with dihydroxyacetone phosphate to form quinolinate.</text>
</comment>
<comment type="catalytic activity">
    <reaction evidence="1">
        <text>iminosuccinate + dihydroxyacetone phosphate = quinolinate + phosphate + 2 H2O + H(+)</text>
        <dbReference type="Rhea" id="RHEA:25888"/>
        <dbReference type="ChEBI" id="CHEBI:15377"/>
        <dbReference type="ChEBI" id="CHEBI:15378"/>
        <dbReference type="ChEBI" id="CHEBI:29959"/>
        <dbReference type="ChEBI" id="CHEBI:43474"/>
        <dbReference type="ChEBI" id="CHEBI:57642"/>
        <dbReference type="ChEBI" id="CHEBI:77875"/>
        <dbReference type="EC" id="2.5.1.72"/>
    </reaction>
    <physiologicalReaction direction="left-to-right" evidence="1">
        <dbReference type="Rhea" id="RHEA:25889"/>
    </physiologicalReaction>
</comment>
<comment type="cofactor">
    <cofactor evidence="1">
        <name>[4Fe-4S] cluster</name>
        <dbReference type="ChEBI" id="CHEBI:49883"/>
    </cofactor>
    <text evidence="1">Binds 1 [4Fe-4S] cluster per subunit.</text>
</comment>
<comment type="pathway">
    <text evidence="1">Cofactor biosynthesis; NAD(+) biosynthesis; quinolinate from iminoaspartate: step 1/1.</text>
</comment>
<comment type="subcellular location">
    <subcellularLocation>
        <location evidence="1">Cytoplasm</location>
    </subcellularLocation>
</comment>
<comment type="similarity">
    <text evidence="1">Belongs to the quinolinate synthase family. Type 1 subfamily.</text>
</comment>
<evidence type="ECO:0000255" key="1">
    <source>
        <dbReference type="HAMAP-Rule" id="MF_00567"/>
    </source>
</evidence>
<protein>
    <recommendedName>
        <fullName evidence="1">Quinolinate synthase</fullName>
        <ecNumber evidence="1">2.5.1.72</ecNumber>
    </recommendedName>
</protein>
<gene>
    <name evidence="1" type="primary">nadA</name>
    <name type="ordered locus">VP1063</name>
</gene>
<sequence>MSHILDKIDTVYPFPPKPIPLSEEEKSSYIASIKELLKQKDAVLIAHYYTDPEIQALAEETGGFVGDSLEMAKFGNRHPASTLIIAGVRFMGESAKILTPEKRILMPTLEAECSLDLGCPADKFSEFCDAHPDHTVVVYANTSAAVKARADWVVTSSIALEIVEHLDAEDKPIIWGPDRHLGSYIANKTGADMLLWQGECVVHDEFSADALRKMKSVYPDAAILVHPESPASVVELADAVGSTSQLIKAAKELPYQQMIVATDKGIFFKMQQLVPEKELIEAPTAGAGATCRSCAHCPWMAMNGLKAIEKALSEGGEEHEIFVDEALRVKSLIPLNRMLDFAEQLNMQVKGNA</sequence>
<reference key="1">
    <citation type="journal article" date="2003" name="Lancet">
        <title>Genome sequence of Vibrio parahaemolyticus: a pathogenic mechanism distinct from that of V. cholerae.</title>
        <authorList>
            <person name="Makino K."/>
            <person name="Oshima K."/>
            <person name="Kurokawa K."/>
            <person name="Yokoyama K."/>
            <person name="Uda T."/>
            <person name="Tagomori K."/>
            <person name="Iijima Y."/>
            <person name="Najima M."/>
            <person name="Nakano M."/>
            <person name="Yamashita A."/>
            <person name="Kubota Y."/>
            <person name="Kimura S."/>
            <person name="Yasunaga T."/>
            <person name="Honda T."/>
            <person name="Shinagawa H."/>
            <person name="Hattori M."/>
            <person name="Iida T."/>
        </authorList>
    </citation>
    <scope>NUCLEOTIDE SEQUENCE [LARGE SCALE GENOMIC DNA]</scope>
    <source>
        <strain>RIMD 2210633</strain>
    </source>
</reference>
<organism>
    <name type="scientific">Vibrio parahaemolyticus serotype O3:K6 (strain RIMD 2210633)</name>
    <dbReference type="NCBI Taxonomy" id="223926"/>
    <lineage>
        <taxon>Bacteria</taxon>
        <taxon>Pseudomonadati</taxon>
        <taxon>Pseudomonadota</taxon>
        <taxon>Gammaproteobacteria</taxon>
        <taxon>Vibrionales</taxon>
        <taxon>Vibrionaceae</taxon>
        <taxon>Vibrio</taxon>
    </lineage>
</organism>